<accession>A6QIW4</accession>
<name>RL31B_STAAE</name>
<reference key="1">
    <citation type="journal article" date="2008" name="J. Bacteriol.">
        <title>Genome sequence of Staphylococcus aureus strain Newman and comparative analysis of staphylococcal genomes: polymorphism and evolution of two major pathogenicity islands.</title>
        <authorList>
            <person name="Baba T."/>
            <person name="Bae T."/>
            <person name="Schneewind O."/>
            <person name="Takeuchi F."/>
            <person name="Hiramatsu K."/>
        </authorList>
    </citation>
    <scope>NUCLEOTIDE SEQUENCE [LARGE SCALE GENOMIC DNA]</scope>
    <source>
        <strain>Newman</strain>
    </source>
</reference>
<feature type="chain" id="PRO_1000072442" description="Large ribosomal subunit protein bL31B">
    <location>
        <begin position="1"/>
        <end position="84"/>
    </location>
</feature>
<dbReference type="EMBL" id="AP009351">
    <property type="protein sequence ID" value="BAF68296.1"/>
    <property type="molecule type" value="Genomic_DNA"/>
</dbReference>
<dbReference type="RefSeq" id="WP_000808968.1">
    <property type="nucleotide sequence ID" value="NZ_JBBIAE010000008.1"/>
</dbReference>
<dbReference type="SMR" id="A6QIW4"/>
<dbReference type="KEGG" id="sae:NWMN_2024"/>
<dbReference type="HOGENOM" id="CLU_114306_2_2_9"/>
<dbReference type="Proteomes" id="UP000006386">
    <property type="component" value="Chromosome"/>
</dbReference>
<dbReference type="GO" id="GO:1990904">
    <property type="term" value="C:ribonucleoprotein complex"/>
    <property type="evidence" value="ECO:0007669"/>
    <property type="project" value="UniProtKB-KW"/>
</dbReference>
<dbReference type="GO" id="GO:0005840">
    <property type="term" value="C:ribosome"/>
    <property type="evidence" value="ECO:0007669"/>
    <property type="project" value="UniProtKB-KW"/>
</dbReference>
<dbReference type="GO" id="GO:0003735">
    <property type="term" value="F:structural constituent of ribosome"/>
    <property type="evidence" value="ECO:0007669"/>
    <property type="project" value="InterPro"/>
</dbReference>
<dbReference type="GO" id="GO:0006412">
    <property type="term" value="P:translation"/>
    <property type="evidence" value="ECO:0007669"/>
    <property type="project" value="UniProtKB-UniRule"/>
</dbReference>
<dbReference type="Gene3D" id="4.10.830.30">
    <property type="entry name" value="Ribosomal protein L31"/>
    <property type="match status" value="1"/>
</dbReference>
<dbReference type="HAMAP" id="MF_00502">
    <property type="entry name" value="Ribosomal_bL31_2"/>
    <property type="match status" value="1"/>
</dbReference>
<dbReference type="InterPro" id="IPR034704">
    <property type="entry name" value="Ribosomal_bL28/bL31-like_sf"/>
</dbReference>
<dbReference type="InterPro" id="IPR002150">
    <property type="entry name" value="Ribosomal_bL31"/>
</dbReference>
<dbReference type="InterPro" id="IPR027493">
    <property type="entry name" value="Ribosomal_bL31_B"/>
</dbReference>
<dbReference type="InterPro" id="IPR042105">
    <property type="entry name" value="Ribosomal_bL31_sf"/>
</dbReference>
<dbReference type="NCBIfam" id="TIGR00105">
    <property type="entry name" value="L31"/>
    <property type="match status" value="1"/>
</dbReference>
<dbReference type="NCBIfam" id="NF002462">
    <property type="entry name" value="PRK01678.1"/>
    <property type="match status" value="1"/>
</dbReference>
<dbReference type="PANTHER" id="PTHR33280">
    <property type="entry name" value="50S RIBOSOMAL PROTEIN L31, CHLOROPLASTIC"/>
    <property type="match status" value="1"/>
</dbReference>
<dbReference type="PANTHER" id="PTHR33280:SF1">
    <property type="entry name" value="LARGE RIBOSOMAL SUBUNIT PROTEIN BL31C"/>
    <property type="match status" value="1"/>
</dbReference>
<dbReference type="Pfam" id="PF01197">
    <property type="entry name" value="Ribosomal_L31"/>
    <property type="match status" value="1"/>
</dbReference>
<dbReference type="PRINTS" id="PR01249">
    <property type="entry name" value="RIBOSOMALL31"/>
</dbReference>
<dbReference type="SUPFAM" id="SSF143800">
    <property type="entry name" value="L28p-like"/>
    <property type="match status" value="1"/>
</dbReference>
<dbReference type="PROSITE" id="PS01143">
    <property type="entry name" value="RIBOSOMAL_L31"/>
    <property type="match status" value="1"/>
</dbReference>
<gene>
    <name evidence="1" type="primary">rpmE2</name>
    <name type="ordered locus">NWMN_2024</name>
</gene>
<comment type="subunit">
    <text evidence="1">Part of the 50S ribosomal subunit.</text>
</comment>
<comment type="similarity">
    <text evidence="1">Belongs to the bacterial ribosomal protein bL31 family. Type B subfamily.</text>
</comment>
<proteinExistence type="inferred from homology"/>
<evidence type="ECO:0000255" key="1">
    <source>
        <dbReference type="HAMAP-Rule" id="MF_00502"/>
    </source>
</evidence>
<evidence type="ECO:0000305" key="2"/>
<organism>
    <name type="scientific">Staphylococcus aureus (strain Newman)</name>
    <dbReference type="NCBI Taxonomy" id="426430"/>
    <lineage>
        <taxon>Bacteria</taxon>
        <taxon>Bacillati</taxon>
        <taxon>Bacillota</taxon>
        <taxon>Bacilli</taxon>
        <taxon>Bacillales</taxon>
        <taxon>Staphylococcaceae</taxon>
        <taxon>Staphylococcus</taxon>
    </lineage>
</organism>
<sequence>MKQGIHPEYHQVIFLDTTTNFKFLSGSTKTSSEMMEWEDGKEYPVIRLDISSDSHPFYTGRQKFAAADGRVERFNKKFGLKSNN</sequence>
<protein>
    <recommendedName>
        <fullName evidence="1">Large ribosomal subunit protein bL31B</fullName>
    </recommendedName>
    <alternativeName>
        <fullName evidence="2">50S ribosomal protein L31 type B</fullName>
    </alternativeName>
</protein>
<keyword id="KW-0687">Ribonucleoprotein</keyword>
<keyword id="KW-0689">Ribosomal protein</keyword>